<protein>
    <recommendedName>
        <fullName evidence="1">Large ribosomal subunit protein uL5</fullName>
    </recommendedName>
    <alternativeName>
        <fullName evidence="2">50S ribosomal protein L5</fullName>
    </alternativeName>
</protein>
<dbReference type="EMBL" id="AY198133">
    <property type="protein sequence ID" value="AAP58903.1"/>
    <property type="molecule type" value="Genomic_DNA"/>
</dbReference>
<dbReference type="SMR" id="Q6XYX6"/>
<dbReference type="GO" id="GO:1990904">
    <property type="term" value="C:ribonucleoprotein complex"/>
    <property type="evidence" value="ECO:0007669"/>
    <property type="project" value="UniProtKB-KW"/>
</dbReference>
<dbReference type="GO" id="GO:0005840">
    <property type="term" value="C:ribosome"/>
    <property type="evidence" value="ECO:0007669"/>
    <property type="project" value="UniProtKB-KW"/>
</dbReference>
<dbReference type="GO" id="GO:0019843">
    <property type="term" value="F:rRNA binding"/>
    <property type="evidence" value="ECO:0007669"/>
    <property type="project" value="UniProtKB-UniRule"/>
</dbReference>
<dbReference type="GO" id="GO:0003735">
    <property type="term" value="F:structural constituent of ribosome"/>
    <property type="evidence" value="ECO:0007669"/>
    <property type="project" value="InterPro"/>
</dbReference>
<dbReference type="GO" id="GO:0000049">
    <property type="term" value="F:tRNA binding"/>
    <property type="evidence" value="ECO:0007669"/>
    <property type="project" value="UniProtKB-UniRule"/>
</dbReference>
<dbReference type="GO" id="GO:0006412">
    <property type="term" value="P:translation"/>
    <property type="evidence" value="ECO:0007669"/>
    <property type="project" value="UniProtKB-UniRule"/>
</dbReference>
<dbReference type="FunFam" id="3.30.1440.10:FF:000001">
    <property type="entry name" value="50S ribosomal protein L5"/>
    <property type="match status" value="1"/>
</dbReference>
<dbReference type="Gene3D" id="3.30.1440.10">
    <property type="match status" value="1"/>
</dbReference>
<dbReference type="HAMAP" id="MF_01333_B">
    <property type="entry name" value="Ribosomal_uL5_B"/>
    <property type="match status" value="1"/>
</dbReference>
<dbReference type="InterPro" id="IPR002132">
    <property type="entry name" value="Ribosomal_uL5"/>
</dbReference>
<dbReference type="InterPro" id="IPR020930">
    <property type="entry name" value="Ribosomal_uL5_bac-type"/>
</dbReference>
<dbReference type="InterPro" id="IPR031309">
    <property type="entry name" value="Ribosomal_uL5_C"/>
</dbReference>
<dbReference type="InterPro" id="IPR022803">
    <property type="entry name" value="Ribosomal_uL5_dom_sf"/>
</dbReference>
<dbReference type="InterPro" id="IPR031310">
    <property type="entry name" value="Ribosomal_uL5_N"/>
</dbReference>
<dbReference type="NCBIfam" id="NF000585">
    <property type="entry name" value="PRK00010.1"/>
    <property type="match status" value="1"/>
</dbReference>
<dbReference type="PANTHER" id="PTHR11994">
    <property type="entry name" value="60S RIBOSOMAL PROTEIN L11-RELATED"/>
    <property type="match status" value="1"/>
</dbReference>
<dbReference type="Pfam" id="PF00281">
    <property type="entry name" value="Ribosomal_L5"/>
    <property type="match status" value="1"/>
</dbReference>
<dbReference type="Pfam" id="PF00673">
    <property type="entry name" value="Ribosomal_L5_C"/>
    <property type="match status" value="1"/>
</dbReference>
<dbReference type="PIRSF" id="PIRSF002161">
    <property type="entry name" value="Ribosomal_L5"/>
    <property type="match status" value="1"/>
</dbReference>
<dbReference type="SUPFAM" id="SSF55282">
    <property type="entry name" value="RL5-like"/>
    <property type="match status" value="1"/>
</dbReference>
<keyword id="KW-0687">Ribonucleoprotein</keyword>
<keyword id="KW-0689">Ribosomal protein</keyword>
<keyword id="KW-0694">RNA-binding</keyword>
<keyword id="KW-0699">rRNA-binding</keyword>
<keyword id="KW-0820">tRNA-binding</keyword>
<evidence type="ECO:0000255" key="1">
    <source>
        <dbReference type="HAMAP-Rule" id="MF_01333"/>
    </source>
</evidence>
<evidence type="ECO:0000305" key="2"/>
<reference key="1">
    <citation type="journal article" date="2003" name="Mol. Genet. Genomics">
        <title>Gene content and organization of an 85-kb DNA segment from the genome of the phytopathogenic mollicute Spiroplasma kunkelii.</title>
        <authorList>
            <person name="Zhao Y."/>
            <person name="Hammond R.W."/>
            <person name="Jomantiene R."/>
            <person name="Dally E.L."/>
            <person name="Lee I.-M."/>
            <person name="Jia H."/>
            <person name="Wu H."/>
            <person name="Lin S."/>
            <person name="Zhang P."/>
            <person name="Kenton S."/>
            <person name="Najar F.Z."/>
            <person name="Hua A."/>
            <person name="Roe B.A."/>
            <person name="Fletcher J."/>
            <person name="Davis R.E."/>
        </authorList>
    </citation>
    <scope>NUCLEOTIDE SEQUENCE [GENOMIC DNA]</scope>
    <source>
        <strain>CR2-3x</strain>
    </source>
</reference>
<proteinExistence type="inferred from homology"/>
<feature type="chain" id="PRO_0000124985" description="Large ribosomal subunit protein uL5">
    <location>
        <begin position="1"/>
        <end position="180"/>
    </location>
</feature>
<sequence>MNVNLEKKYKNTIVKELFKEQRFQSIMQVPVVKKIVVNMGAGDATQNSKVIEDITNELALITGLRPVVTKAKDSIASFKLREGMPIGAKVTLRGKKMYQFLDKLINIALPRVRDFRGLNKDAFDGRGNYTLGIKEQIIFPEIDYDKVKRVRGMDITIVTSATNDADARALLRKMGMPFKK</sequence>
<organism>
    <name type="scientific">Spiroplasma kunkelii</name>
    <dbReference type="NCBI Taxonomy" id="47834"/>
    <lineage>
        <taxon>Bacteria</taxon>
        <taxon>Bacillati</taxon>
        <taxon>Mycoplasmatota</taxon>
        <taxon>Mollicutes</taxon>
        <taxon>Entomoplasmatales</taxon>
        <taxon>Spiroplasmataceae</taxon>
        <taxon>Spiroplasma</taxon>
    </lineage>
</organism>
<comment type="function">
    <text evidence="1">This is one of the proteins that bind and probably mediate the attachment of the 5S RNA into the large ribosomal subunit, where it forms part of the central protuberance. In the 70S ribosome it contacts protein S13 of the 30S subunit (bridge B1b), connecting the 2 subunits; this bridge is implicated in subunit movement. Contacts the P site tRNA; the 5S rRNA and some of its associated proteins might help stabilize positioning of ribosome-bound tRNAs.</text>
</comment>
<comment type="subunit">
    <text evidence="1">Part of the 50S ribosomal subunit; part of the 5S rRNA/L5/L18/L25 subcomplex. Contacts the 5S rRNA and the P site tRNA. Forms a bridge to the 30S subunit in the 70S ribosome.</text>
</comment>
<comment type="similarity">
    <text evidence="1">Belongs to the universal ribosomal protein uL5 family.</text>
</comment>
<name>RL5_SPIKU</name>
<accession>Q6XYX6</accession>
<gene>
    <name evidence="1" type="primary">rplE</name>
</gene>